<name>DAPB_BURM9</name>
<gene>
    <name evidence="1" type="primary">dapB</name>
    <name type="ordered locus">BMA10229_A1232</name>
</gene>
<organism>
    <name type="scientific">Burkholderia mallei (strain NCTC 10229)</name>
    <dbReference type="NCBI Taxonomy" id="412022"/>
    <lineage>
        <taxon>Bacteria</taxon>
        <taxon>Pseudomonadati</taxon>
        <taxon>Pseudomonadota</taxon>
        <taxon>Betaproteobacteria</taxon>
        <taxon>Burkholderiales</taxon>
        <taxon>Burkholderiaceae</taxon>
        <taxon>Burkholderia</taxon>
        <taxon>pseudomallei group</taxon>
    </lineage>
</organism>
<accession>A2S5J7</accession>
<feature type="chain" id="PRO_1000008543" description="4-hydroxy-tetrahydrodipicolinate reductase">
    <location>
        <begin position="1"/>
        <end position="268"/>
    </location>
</feature>
<feature type="active site" description="Proton donor/acceptor" evidence="1">
    <location>
        <position position="156"/>
    </location>
</feature>
<feature type="active site" description="Proton donor" evidence="1">
    <location>
        <position position="160"/>
    </location>
</feature>
<feature type="binding site" evidence="1">
    <location>
        <begin position="10"/>
        <end position="15"/>
    </location>
    <ligand>
        <name>NAD(+)</name>
        <dbReference type="ChEBI" id="CHEBI:57540"/>
    </ligand>
</feature>
<feature type="binding site" evidence="1">
    <location>
        <position position="36"/>
    </location>
    <ligand>
        <name>NAD(+)</name>
        <dbReference type="ChEBI" id="CHEBI:57540"/>
    </ligand>
</feature>
<feature type="binding site" evidence="1">
    <location>
        <position position="37"/>
    </location>
    <ligand>
        <name>NADP(+)</name>
        <dbReference type="ChEBI" id="CHEBI:58349"/>
    </ligand>
</feature>
<feature type="binding site" evidence="1">
    <location>
        <begin position="99"/>
        <end position="101"/>
    </location>
    <ligand>
        <name>NAD(+)</name>
        <dbReference type="ChEBI" id="CHEBI:57540"/>
    </ligand>
</feature>
<feature type="binding site" evidence="1">
    <location>
        <begin position="123"/>
        <end position="126"/>
    </location>
    <ligand>
        <name>NAD(+)</name>
        <dbReference type="ChEBI" id="CHEBI:57540"/>
    </ligand>
</feature>
<feature type="binding site" evidence="1">
    <location>
        <position position="157"/>
    </location>
    <ligand>
        <name>(S)-2,3,4,5-tetrahydrodipicolinate</name>
        <dbReference type="ChEBI" id="CHEBI:16845"/>
    </ligand>
</feature>
<feature type="binding site" evidence="1">
    <location>
        <begin position="166"/>
        <end position="167"/>
    </location>
    <ligand>
        <name>(S)-2,3,4,5-tetrahydrodipicolinate</name>
        <dbReference type="ChEBI" id="CHEBI:16845"/>
    </ligand>
</feature>
<comment type="function">
    <text evidence="1">Catalyzes the conversion of 4-hydroxy-tetrahydrodipicolinate (HTPA) to tetrahydrodipicolinate.</text>
</comment>
<comment type="catalytic activity">
    <reaction evidence="1">
        <text>(S)-2,3,4,5-tetrahydrodipicolinate + NAD(+) + H2O = (2S,4S)-4-hydroxy-2,3,4,5-tetrahydrodipicolinate + NADH + H(+)</text>
        <dbReference type="Rhea" id="RHEA:35323"/>
        <dbReference type="ChEBI" id="CHEBI:15377"/>
        <dbReference type="ChEBI" id="CHEBI:15378"/>
        <dbReference type="ChEBI" id="CHEBI:16845"/>
        <dbReference type="ChEBI" id="CHEBI:57540"/>
        <dbReference type="ChEBI" id="CHEBI:57945"/>
        <dbReference type="ChEBI" id="CHEBI:67139"/>
        <dbReference type="EC" id="1.17.1.8"/>
    </reaction>
</comment>
<comment type="catalytic activity">
    <reaction evidence="1">
        <text>(S)-2,3,4,5-tetrahydrodipicolinate + NADP(+) + H2O = (2S,4S)-4-hydroxy-2,3,4,5-tetrahydrodipicolinate + NADPH + H(+)</text>
        <dbReference type="Rhea" id="RHEA:35331"/>
        <dbReference type="ChEBI" id="CHEBI:15377"/>
        <dbReference type="ChEBI" id="CHEBI:15378"/>
        <dbReference type="ChEBI" id="CHEBI:16845"/>
        <dbReference type="ChEBI" id="CHEBI:57783"/>
        <dbReference type="ChEBI" id="CHEBI:58349"/>
        <dbReference type="ChEBI" id="CHEBI:67139"/>
        <dbReference type="EC" id="1.17.1.8"/>
    </reaction>
</comment>
<comment type="pathway">
    <text evidence="1">Amino-acid biosynthesis; L-lysine biosynthesis via DAP pathway; (S)-tetrahydrodipicolinate from L-aspartate: step 4/4.</text>
</comment>
<comment type="subcellular location">
    <subcellularLocation>
        <location evidence="1">Cytoplasm</location>
    </subcellularLocation>
</comment>
<comment type="similarity">
    <text evidence="1">Belongs to the DapB family.</text>
</comment>
<comment type="caution">
    <text evidence="2">Was originally thought to be a dihydrodipicolinate reductase (DHDPR), catalyzing the conversion of dihydrodipicolinate to tetrahydrodipicolinate. However, it was shown in E.coli that the substrate of the enzymatic reaction is not dihydrodipicolinate (DHDP) but in fact (2S,4S)-4-hydroxy-2,3,4,5-tetrahydrodipicolinic acid (HTPA), the product released by the DapA-catalyzed reaction.</text>
</comment>
<proteinExistence type="inferred from homology"/>
<protein>
    <recommendedName>
        <fullName evidence="1">4-hydroxy-tetrahydrodipicolinate reductase</fullName>
        <shortName evidence="1">HTPA reductase</shortName>
        <ecNumber evidence="1">1.17.1.8</ecNumber>
    </recommendedName>
</protein>
<evidence type="ECO:0000255" key="1">
    <source>
        <dbReference type="HAMAP-Rule" id="MF_00102"/>
    </source>
</evidence>
<evidence type="ECO:0000305" key="2"/>
<reference key="1">
    <citation type="journal article" date="2010" name="Genome Biol. Evol.">
        <title>Continuing evolution of Burkholderia mallei through genome reduction and large-scale rearrangements.</title>
        <authorList>
            <person name="Losada L."/>
            <person name="Ronning C.M."/>
            <person name="DeShazer D."/>
            <person name="Woods D."/>
            <person name="Fedorova N."/>
            <person name="Kim H.S."/>
            <person name="Shabalina S.A."/>
            <person name="Pearson T.R."/>
            <person name="Brinkac L."/>
            <person name="Tan P."/>
            <person name="Nandi T."/>
            <person name="Crabtree J."/>
            <person name="Badger J."/>
            <person name="Beckstrom-Sternberg S."/>
            <person name="Saqib M."/>
            <person name="Schutzer S.E."/>
            <person name="Keim P."/>
            <person name="Nierman W.C."/>
        </authorList>
    </citation>
    <scope>NUCLEOTIDE SEQUENCE [LARGE SCALE GENOMIC DNA]</scope>
    <source>
        <strain>NCTC 10229</strain>
    </source>
</reference>
<keyword id="KW-0028">Amino-acid biosynthesis</keyword>
<keyword id="KW-0963">Cytoplasm</keyword>
<keyword id="KW-0220">Diaminopimelate biosynthesis</keyword>
<keyword id="KW-0457">Lysine biosynthesis</keyword>
<keyword id="KW-0520">NAD</keyword>
<keyword id="KW-0521">NADP</keyword>
<keyword id="KW-0560">Oxidoreductase</keyword>
<sequence>MSSMKIAIAGASGRMGRMLIEAVLAAPDATLAGALDRTGSSQLGQDAGAFLGKQTGVALTDDIERVCAEADYLIDFTRPEGTLAHLDAALRHDVKLVIGTTGFSEPQKAQLRAAGGKIALVFSANMSVGVNVTMKLLEFAAKQFAQGYDIEIIEAHHRHKVDAPSGTALMMGETIAAATGRTLDDCAVYGRHGVTGERDPSTIGFSAIRGGDIVGDHTVLFAGIGERIEITHKSASRVSYAQGALRAARFLAGHQAGFFDMQDVLGLR</sequence>
<dbReference type="EC" id="1.17.1.8" evidence="1"/>
<dbReference type="EMBL" id="CP000546">
    <property type="protein sequence ID" value="ABN02151.1"/>
    <property type="molecule type" value="Genomic_DNA"/>
</dbReference>
<dbReference type="SMR" id="A2S5J7"/>
<dbReference type="KEGG" id="bml:BMA10229_A1232"/>
<dbReference type="HOGENOM" id="CLU_047479_2_1_4"/>
<dbReference type="UniPathway" id="UPA00034">
    <property type="reaction ID" value="UER00018"/>
</dbReference>
<dbReference type="Proteomes" id="UP000002283">
    <property type="component" value="Chromosome I"/>
</dbReference>
<dbReference type="GO" id="GO:0005829">
    <property type="term" value="C:cytosol"/>
    <property type="evidence" value="ECO:0007669"/>
    <property type="project" value="TreeGrafter"/>
</dbReference>
<dbReference type="GO" id="GO:0008839">
    <property type="term" value="F:4-hydroxy-tetrahydrodipicolinate reductase"/>
    <property type="evidence" value="ECO:0007669"/>
    <property type="project" value="UniProtKB-EC"/>
</dbReference>
<dbReference type="GO" id="GO:0051287">
    <property type="term" value="F:NAD binding"/>
    <property type="evidence" value="ECO:0007669"/>
    <property type="project" value="UniProtKB-UniRule"/>
</dbReference>
<dbReference type="GO" id="GO:0050661">
    <property type="term" value="F:NADP binding"/>
    <property type="evidence" value="ECO:0007669"/>
    <property type="project" value="UniProtKB-UniRule"/>
</dbReference>
<dbReference type="GO" id="GO:0016726">
    <property type="term" value="F:oxidoreductase activity, acting on CH or CH2 groups, NAD or NADP as acceptor"/>
    <property type="evidence" value="ECO:0007669"/>
    <property type="project" value="UniProtKB-UniRule"/>
</dbReference>
<dbReference type="GO" id="GO:0019877">
    <property type="term" value="P:diaminopimelate biosynthetic process"/>
    <property type="evidence" value="ECO:0007669"/>
    <property type="project" value="UniProtKB-UniRule"/>
</dbReference>
<dbReference type="GO" id="GO:0009089">
    <property type="term" value="P:lysine biosynthetic process via diaminopimelate"/>
    <property type="evidence" value="ECO:0007669"/>
    <property type="project" value="UniProtKB-UniRule"/>
</dbReference>
<dbReference type="CDD" id="cd02274">
    <property type="entry name" value="DHDPR_N"/>
    <property type="match status" value="1"/>
</dbReference>
<dbReference type="FunFam" id="3.30.360.10:FF:000004">
    <property type="entry name" value="4-hydroxy-tetrahydrodipicolinate reductase"/>
    <property type="match status" value="1"/>
</dbReference>
<dbReference type="FunFam" id="3.40.50.720:FF:000048">
    <property type="entry name" value="4-hydroxy-tetrahydrodipicolinate reductase"/>
    <property type="match status" value="1"/>
</dbReference>
<dbReference type="Gene3D" id="3.30.360.10">
    <property type="entry name" value="Dihydrodipicolinate Reductase, domain 2"/>
    <property type="match status" value="1"/>
</dbReference>
<dbReference type="Gene3D" id="3.40.50.720">
    <property type="entry name" value="NAD(P)-binding Rossmann-like Domain"/>
    <property type="match status" value="1"/>
</dbReference>
<dbReference type="HAMAP" id="MF_00102">
    <property type="entry name" value="DapB"/>
    <property type="match status" value="1"/>
</dbReference>
<dbReference type="InterPro" id="IPR022663">
    <property type="entry name" value="DapB_C"/>
</dbReference>
<dbReference type="InterPro" id="IPR000846">
    <property type="entry name" value="DapB_N"/>
</dbReference>
<dbReference type="InterPro" id="IPR022664">
    <property type="entry name" value="DapB_N_CS"/>
</dbReference>
<dbReference type="InterPro" id="IPR023940">
    <property type="entry name" value="DHDPR_bac"/>
</dbReference>
<dbReference type="InterPro" id="IPR036291">
    <property type="entry name" value="NAD(P)-bd_dom_sf"/>
</dbReference>
<dbReference type="NCBIfam" id="TIGR00036">
    <property type="entry name" value="dapB"/>
    <property type="match status" value="1"/>
</dbReference>
<dbReference type="PANTHER" id="PTHR20836:SF0">
    <property type="entry name" value="4-HYDROXY-TETRAHYDRODIPICOLINATE REDUCTASE 1, CHLOROPLASTIC-RELATED"/>
    <property type="match status" value="1"/>
</dbReference>
<dbReference type="PANTHER" id="PTHR20836">
    <property type="entry name" value="DIHYDRODIPICOLINATE REDUCTASE"/>
    <property type="match status" value="1"/>
</dbReference>
<dbReference type="Pfam" id="PF05173">
    <property type="entry name" value="DapB_C"/>
    <property type="match status" value="1"/>
</dbReference>
<dbReference type="Pfam" id="PF01113">
    <property type="entry name" value="DapB_N"/>
    <property type="match status" value="1"/>
</dbReference>
<dbReference type="PIRSF" id="PIRSF000161">
    <property type="entry name" value="DHPR"/>
    <property type="match status" value="1"/>
</dbReference>
<dbReference type="SUPFAM" id="SSF55347">
    <property type="entry name" value="Glyceraldehyde-3-phosphate dehydrogenase-like, C-terminal domain"/>
    <property type="match status" value="1"/>
</dbReference>
<dbReference type="SUPFAM" id="SSF51735">
    <property type="entry name" value="NAD(P)-binding Rossmann-fold domains"/>
    <property type="match status" value="1"/>
</dbReference>
<dbReference type="PROSITE" id="PS01298">
    <property type="entry name" value="DAPB"/>
    <property type="match status" value="1"/>
</dbReference>